<feature type="chain" id="PRO_1000019339" description="Ferrochelatase">
    <location>
        <begin position="1"/>
        <end position="391"/>
    </location>
</feature>
<feature type="binding site" evidence="1">
    <location>
        <position position="196"/>
    </location>
    <ligand>
        <name>Fe cation</name>
        <dbReference type="ChEBI" id="CHEBI:24875"/>
    </ligand>
</feature>
<feature type="binding site" evidence="1">
    <location>
        <position position="281"/>
    </location>
    <ligand>
        <name>Fe cation</name>
        <dbReference type="ChEBI" id="CHEBI:24875"/>
    </ligand>
</feature>
<organism>
    <name type="scientific">Prochlorococcus marinus (strain MIT 9312)</name>
    <dbReference type="NCBI Taxonomy" id="74546"/>
    <lineage>
        <taxon>Bacteria</taxon>
        <taxon>Bacillati</taxon>
        <taxon>Cyanobacteriota</taxon>
        <taxon>Cyanophyceae</taxon>
        <taxon>Synechococcales</taxon>
        <taxon>Prochlorococcaceae</taxon>
        <taxon>Prochlorococcus</taxon>
    </lineage>
</organism>
<keyword id="KW-0963">Cytoplasm</keyword>
<keyword id="KW-0350">Heme biosynthesis</keyword>
<keyword id="KW-0408">Iron</keyword>
<keyword id="KW-0456">Lyase</keyword>
<keyword id="KW-0479">Metal-binding</keyword>
<keyword id="KW-0627">Porphyrin biosynthesis</keyword>
<name>HEMH_PROM9</name>
<gene>
    <name evidence="1" type="primary">hemH</name>
    <name type="ordered locus">PMT9312_0525</name>
</gene>
<accession>Q31C09</accession>
<comment type="function">
    <text evidence="1">Catalyzes the ferrous insertion into protoporphyrin IX.</text>
</comment>
<comment type="catalytic activity">
    <reaction evidence="1">
        <text>heme b + 2 H(+) = protoporphyrin IX + Fe(2+)</text>
        <dbReference type="Rhea" id="RHEA:22584"/>
        <dbReference type="ChEBI" id="CHEBI:15378"/>
        <dbReference type="ChEBI" id="CHEBI:29033"/>
        <dbReference type="ChEBI" id="CHEBI:57306"/>
        <dbReference type="ChEBI" id="CHEBI:60344"/>
        <dbReference type="EC" id="4.98.1.1"/>
    </reaction>
</comment>
<comment type="pathway">
    <text evidence="1">Porphyrin-containing compound metabolism; protoheme biosynthesis; protoheme from protoporphyrin-IX: step 1/1.</text>
</comment>
<comment type="subcellular location">
    <subcellularLocation>
        <location evidence="1">Cytoplasm</location>
    </subcellularLocation>
</comment>
<comment type="similarity">
    <text evidence="1">Belongs to the ferrochelatase family.</text>
</comment>
<protein>
    <recommendedName>
        <fullName evidence="1">Ferrochelatase</fullName>
        <ecNumber evidence="1">4.98.1.1</ecNumber>
    </recommendedName>
    <alternativeName>
        <fullName evidence="1">Heme synthase</fullName>
    </alternativeName>
    <alternativeName>
        <fullName evidence="1">Protoheme ferro-lyase</fullName>
    </alternativeName>
</protein>
<sequence length="391" mass="44332">MNKIGVLLMNLGGPERITDVGPFLYNLFSDPEIIRTPFPAFQKPLAWLISTLRSTTSQQAYLSIGGGSPIRRITEQQARELQSKLREKGLNATTYIAMRYWHPFTESAIADMKADCVDQIVVLPLYPHFSISTSGSSFRELKKLRDSDNDFKKIPMRCVRSWFSQSGYLKSMVELISQQISCCESPPNAHIFFTAHGVPKSYVEEAGDPYKQQIEDCSLLIINELEKYLGHSNPHTLSYQSRVGPVEWLKPYTEEVLADLGKSNVEDLIVVPISFVGEHIETLQEIDIEYKEIAEKAGIKNFRRVKALNTHPTFIEGLSDLVISCLEEPQVNIEEASKLPEKVKLYPQEKWQWGWNNSSEVWNGRVAMIVFLVLFIELIAGSGPLHRLGIL</sequence>
<reference key="1">
    <citation type="journal article" date="2006" name="Science">
        <title>Genomic islands and the ecology and evolution of Prochlorococcus.</title>
        <authorList>
            <person name="Coleman M.L."/>
            <person name="Sullivan M.B."/>
            <person name="Martiny A.C."/>
            <person name="Steglich C."/>
            <person name="Barry K."/>
            <person name="Delong E.F."/>
            <person name="Chisholm S.W."/>
        </authorList>
    </citation>
    <scope>NUCLEOTIDE SEQUENCE [LARGE SCALE GENOMIC DNA]</scope>
    <source>
        <strain>MIT 9312</strain>
    </source>
</reference>
<dbReference type="EC" id="4.98.1.1" evidence="1"/>
<dbReference type="EMBL" id="CP000111">
    <property type="protein sequence ID" value="ABB49586.1"/>
    <property type="molecule type" value="Genomic_DNA"/>
</dbReference>
<dbReference type="RefSeq" id="WP_011376084.1">
    <property type="nucleotide sequence ID" value="NC_007577.1"/>
</dbReference>
<dbReference type="SMR" id="Q31C09"/>
<dbReference type="STRING" id="74546.PMT9312_0525"/>
<dbReference type="KEGG" id="pmi:PMT9312_0525"/>
<dbReference type="eggNOG" id="COG0276">
    <property type="taxonomic scope" value="Bacteria"/>
</dbReference>
<dbReference type="HOGENOM" id="CLU_018884_4_3_3"/>
<dbReference type="OrthoDB" id="9809741at2"/>
<dbReference type="UniPathway" id="UPA00252">
    <property type="reaction ID" value="UER00325"/>
</dbReference>
<dbReference type="Proteomes" id="UP000002715">
    <property type="component" value="Chromosome"/>
</dbReference>
<dbReference type="GO" id="GO:0005737">
    <property type="term" value="C:cytoplasm"/>
    <property type="evidence" value="ECO:0007669"/>
    <property type="project" value="UniProtKB-SubCell"/>
</dbReference>
<dbReference type="GO" id="GO:0004325">
    <property type="term" value="F:ferrochelatase activity"/>
    <property type="evidence" value="ECO:0007669"/>
    <property type="project" value="UniProtKB-UniRule"/>
</dbReference>
<dbReference type="GO" id="GO:0046872">
    <property type="term" value="F:metal ion binding"/>
    <property type="evidence" value="ECO:0007669"/>
    <property type="project" value="UniProtKB-KW"/>
</dbReference>
<dbReference type="GO" id="GO:0006783">
    <property type="term" value="P:heme biosynthetic process"/>
    <property type="evidence" value="ECO:0007669"/>
    <property type="project" value="UniProtKB-UniRule"/>
</dbReference>
<dbReference type="CDD" id="cd00419">
    <property type="entry name" value="Ferrochelatase_C"/>
    <property type="match status" value="1"/>
</dbReference>
<dbReference type="CDD" id="cd03411">
    <property type="entry name" value="Ferrochelatase_N"/>
    <property type="match status" value="1"/>
</dbReference>
<dbReference type="FunFam" id="3.40.50.1400:FF:000006">
    <property type="entry name" value="Ferrochelatase"/>
    <property type="match status" value="1"/>
</dbReference>
<dbReference type="Gene3D" id="3.40.50.1400">
    <property type="match status" value="2"/>
</dbReference>
<dbReference type="HAMAP" id="MF_00323">
    <property type="entry name" value="Ferrochelatase"/>
    <property type="match status" value="1"/>
</dbReference>
<dbReference type="InterPro" id="IPR001015">
    <property type="entry name" value="Ferrochelatase"/>
</dbReference>
<dbReference type="InterPro" id="IPR019772">
    <property type="entry name" value="Ferrochelatase_AS"/>
</dbReference>
<dbReference type="InterPro" id="IPR033644">
    <property type="entry name" value="Ferrochelatase_C"/>
</dbReference>
<dbReference type="InterPro" id="IPR033659">
    <property type="entry name" value="Ferrochelatase_N"/>
</dbReference>
<dbReference type="NCBIfam" id="TIGR00109">
    <property type="entry name" value="hemH"/>
    <property type="match status" value="1"/>
</dbReference>
<dbReference type="PANTHER" id="PTHR11108">
    <property type="entry name" value="FERROCHELATASE"/>
    <property type="match status" value="1"/>
</dbReference>
<dbReference type="PANTHER" id="PTHR11108:SF1">
    <property type="entry name" value="FERROCHELATASE, MITOCHONDRIAL"/>
    <property type="match status" value="1"/>
</dbReference>
<dbReference type="Pfam" id="PF00762">
    <property type="entry name" value="Ferrochelatase"/>
    <property type="match status" value="1"/>
</dbReference>
<dbReference type="SUPFAM" id="SSF53800">
    <property type="entry name" value="Chelatase"/>
    <property type="match status" value="1"/>
</dbReference>
<dbReference type="SUPFAM" id="SSF103511">
    <property type="entry name" value="Chlorophyll a-b binding protein"/>
    <property type="match status" value="1"/>
</dbReference>
<dbReference type="PROSITE" id="PS00534">
    <property type="entry name" value="FERROCHELATASE"/>
    <property type="match status" value="1"/>
</dbReference>
<proteinExistence type="inferred from homology"/>
<evidence type="ECO:0000255" key="1">
    <source>
        <dbReference type="HAMAP-Rule" id="MF_00323"/>
    </source>
</evidence>